<protein>
    <recommendedName>
        <fullName evidence="1">tRNA-2-methylthio-N(6)-dimethylallyladenosine synthase</fullName>
        <ecNumber evidence="1">2.8.4.3</ecNumber>
    </recommendedName>
    <alternativeName>
        <fullName evidence="1">(Dimethylallyl)adenosine tRNA methylthiotransferase MiaB</fullName>
    </alternativeName>
    <alternativeName>
        <fullName evidence="1">tRNA-i(6)A37 methylthiotransferase</fullName>
    </alternativeName>
</protein>
<keyword id="KW-0004">4Fe-4S</keyword>
<keyword id="KW-0963">Cytoplasm</keyword>
<keyword id="KW-0408">Iron</keyword>
<keyword id="KW-0411">Iron-sulfur</keyword>
<keyword id="KW-0479">Metal-binding</keyword>
<keyword id="KW-0949">S-adenosyl-L-methionine</keyword>
<keyword id="KW-0808">Transferase</keyword>
<keyword id="KW-0819">tRNA processing</keyword>
<comment type="function">
    <text evidence="1">Catalyzes the methylthiolation of N6-(dimethylallyl)adenosine (i(6)A), leading to the formation of 2-methylthio-N6-(dimethylallyl)adenosine (ms(2)i(6)A) at position 37 in tRNAs that read codons beginning with uridine.</text>
</comment>
<comment type="catalytic activity">
    <reaction evidence="1">
        <text>N(6)-dimethylallyladenosine(37) in tRNA + (sulfur carrier)-SH + AH2 + 2 S-adenosyl-L-methionine = 2-methylsulfanyl-N(6)-dimethylallyladenosine(37) in tRNA + (sulfur carrier)-H + 5'-deoxyadenosine + L-methionine + A + S-adenosyl-L-homocysteine + 2 H(+)</text>
        <dbReference type="Rhea" id="RHEA:37067"/>
        <dbReference type="Rhea" id="RHEA-COMP:10375"/>
        <dbReference type="Rhea" id="RHEA-COMP:10376"/>
        <dbReference type="Rhea" id="RHEA-COMP:14737"/>
        <dbReference type="Rhea" id="RHEA-COMP:14739"/>
        <dbReference type="ChEBI" id="CHEBI:13193"/>
        <dbReference type="ChEBI" id="CHEBI:15378"/>
        <dbReference type="ChEBI" id="CHEBI:17319"/>
        <dbReference type="ChEBI" id="CHEBI:17499"/>
        <dbReference type="ChEBI" id="CHEBI:29917"/>
        <dbReference type="ChEBI" id="CHEBI:57844"/>
        <dbReference type="ChEBI" id="CHEBI:57856"/>
        <dbReference type="ChEBI" id="CHEBI:59789"/>
        <dbReference type="ChEBI" id="CHEBI:64428"/>
        <dbReference type="ChEBI" id="CHEBI:74415"/>
        <dbReference type="ChEBI" id="CHEBI:74417"/>
        <dbReference type="EC" id="2.8.4.3"/>
    </reaction>
</comment>
<comment type="cofactor">
    <cofactor evidence="1">
        <name>[4Fe-4S] cluster</name>
        <dbReference type="ChEBI" id="CHEBI:49883"/>
    </cofactor>
    <text evidence="1">Binds 2 [4Fe-4S] clusters. One cluster is coordinated with 3 cysteines and an exchangeable S-adenosyl-L-methionine.</text>
</comment>
<comment type="subunit">
    <text evidence="1">Monomer.</text>
</comment>
<comment type="subcellular location">
    <subcellularLocation>
        <location evidence="1">Cytoplasm</location>
    </subcellularLocation>
</comment>
<comment type="similarity">
    <text evidence="1">Belongs to the methylthiotransferase family. MiaB subfamily.</text>
</comment>
<organism>
    <name type="scientific">Burkholderia vietnamiensis (strain G4 / LMG 22486)</name>
    <name type="common">Burkholderia cepacia (strain R1808)</name>
    <dbReference type="NCBI Taxonomy" id="269482"/>
    <lineage>
        <taxon>Bacteria</taxon>
        <taxon>Pseudomonadati</taxon>
        <taxon>Pseudomonadota</taxon>
        <taxon>Betaproteobacteria</taxon>
        <taxon>Burkholderiales</taxon>
        <taxon>Burkholderiaceae</taxon>
        <taxon>Burkholderia</taxon>
        <taxon>Burkholderia cepacia complex</taxon>
    </lineage>
</organism>
<dbReference type="EC" id="2.8.4.3" evidence="1"/>
<dbReference type="EMBL" id="CP000614">
    <property type="protein sequence ID" value="ABO55786.1"/>
    <property type="molecule type" value="Genomic_DNA"/>
</dbReference>
<dbReference type="SMR" id="A4JHN3"/>
<dbReference type="KEGG" id="bvi:Bcep1808_2795"/>
<dbReference type="eggNOG" id="COG0621">
    <property type="taxonomic scope" value="Bacteria"/>
</dbReference>
<dbReference type="HOGENOM" id="CLU_018697_2_0_4"/>
<dbReference type="Proteomes" id="UP000002287">
    <property type="component" value="Chromosome 1"/>
</dbReference>
<dbReference type="GO" id="GO:0005829">
    <property type="term" value="C:cytosol"/>
    <property type="evidence" value="ECO:0007669"/>
    <property type="project" value="TreeGrafter"/>
</dbReference>
<dbReference type="GO" id="GO:0051539">
    <property type="term" value="F:4 iron, 4 sulfur cluster binding"/>
    <property type="evidence" value="ECO:0007669"/>
    <property type="project" value="UniProtKB-UniRule"/>
</dbReference>
<dbReference type="GO" id="GO:0046872">
    <property type="term" value="F:metal ion binding"/>
    <property type="evidence" value="ECO:0007669"/>
    <property type="project" value="UniProtKB-KW"/>
</dbReference>
<dbReference type="GO" id="GO:0035597">
    <property type="term" value="F:N6-isopentenyladenosine methylthiotransferase activity"/>
    <property type="evidence" value="ECO:0007669"/>
    <property type="project" value="TreeGrafter"/>
</dbReference>
<dbReference type="CDD" id="cd01335">
    <property type="entry name" value="Radical_SAM"/>
    <property type="match status" value="1"/>
</dbReference>
<dbReference type="FunFam" id="3.40.50.12160:FF:000001">
    <property type="entry name" value="tRNA-2-methylthio-N(6)-dimethylallyladenosine synthase"/>
    <property type="match status" value="1"/>
</dbReference>
<dbReference type="FunFam" id="3.80.30.20:FF:000001">
    <property type="entry name" value="tRNA-2-methylthio-N(6)-dimethylallyladenosine synthase 2"/>
    <property type="match status" value="1"/>
</dbReference>
<dbReference type="Gene3D" id="3.40.50.12160">
    <property type="entry name" value="Methylthiotransferase, N-terminal domain"/>
    <property type="match status" value="1"/>
</dbReference>
<dbReference type="Gene3D" id="3.80.30.20">
    <property type="entry name" value="tm_1862 like domain"/>
    <property type="match status" value="1"/>
</dbReference>
<dbReference type="HAMAP" id="MF_01864">
    <property type="entry name" value="tRNA_metthiotr_MiaB"/>
    <property type="match status" value="1"/>
</dbReference>
<dbReference type="InterPro" id="IPR006638">
    <property type="entry name" value="Elp3/MiaA/NifB-like_rSAM"/>
</dbReference>
<dbReference type="InterPro" id="IPR005839">
    <property type="entry name" value="Methylthiotransferase"/>
</dbReference>
<dbReference type="InterPro" id="IPR020612">
    <property type="entry name" value="Methylthiotransferase_CS"/>
</dbReference>
<dbReference type="InterPro" id="IPR013848">
    <property type="entry name" value="Methylthiotransferase_N"/>
</dbReference>
<dbReference type="InterPro" id="IPR038135">
    <property type="entry name" value="Methylthiotransferase_N_sf"/>
</dbReference>
<dbReference type="InterPro" id="IPR006463">
    <property type="entry name" value="MiaB_methiolase"/>
</dbReference>
<dbReference type="InterPro" id="IPR007197">
    <property type="entry name" value="rSAM"/>
</dbReference>
<dbReference type="InterPro" id="IPR023404">
    <property type="entry name" value="rSAM_horseshoe"/>
</dbReference>
<dbReference type="InterPro" id="IPR002792">
    <property type="entry name" value="TRAM_dom"/>
</dbReference>
<dbReference type="NCBIfam" id="TIGR01574">
    <property type="entry name" value="miaB-methiolase"/>
    <property type="match status" value="1"/>
</dbReference>
<dbReference type="NCBIfam" id="TIGR00089">
    <property type="entry name" value="MiaB/RimO family radical SAM methylthiotransferase"/>
    <property type="match status" value="1"/>
</dbReference>
<dbReference type="PANTHER" id="PTHR43020">
    <property type="entry name" value="CDK5 REGULATORY SUBUNIT-ASSOCIATED PROTEIN 1"/>
    <property type="match status" value="1"/>
</dbReference>
<dbReference type="PANTHER" id="PTHR43020:SF2">
    <property type="entry name" value="MITOCHONDRIAL TRNA METHYLTHIOTRANSFERASE CDK5RAP1"/>
    <property type="match status" value="1"/>
</dbReference>
<dbReference type="Pfam" id="PF04055">
    <property type="entry name" value="Radical_SAM"/>
    <property type="match status" value="1"/>
</dbReference>
<dbReference type="Pfam" id="PF01938">
    <property type="entry name" value="TRAM"/>
    <property type="match status" value="1"/>
</dbReference>
<dbReference type="Pfam" id="PF00919">
    <property type="entry name" value="UPF0004"/>
    <property type="match status" value="1"/>
</dbReference>
<dbReference type="SFLD" id="SFLDF00273">
    <property type="entry name" value="(dimethylallyl)adenosine_tRNA"/>
    <property type="match status" value="1"/>
</dbReference>
<dbReference type="SFLD" id="SFLDG01082">
    <property type="entry name" value="B12-binding_domain_containing"/>
    <property type="match status" value="1"/>
</dbReference>
<dbReference type="SFLD" id="SFLDS00029">
    <property type="entry name" value="Radical_SAM"/>
    <property type="match status" value="1"/>
</dbReference>
<dbReference type="SMART" id="SM00729">
    <property type="entry name" value="Elp3"/>
    <property type="match status" value="1"/>
</dbReference>
<dbReference type="SUPFAM" id="SSF102114">
    <property type="entry name" value="Radical SAM enzymes"/>
    <property type="match status" value="1"/>
</dbReference>
<dbReference type="PROSITE" id="PS51449">
    <property type="entry name" value="MTTASE_N"/>
    <property type="match status" value="1"/>
</dbReference>
<dbReference type="PROSITE" id="PS01278">
    <property type="entry name" value="MTTASE_RADICAL"/>
    <property type="match status" value="1"/>
</dbReference>
<dbReference type="PROSITE" id="PS51918">
    <property type="entry name" value="RADICAL_SAM"/>
    <property type="match status" value="1"/>
</dbReference>
<dbReference type="PROSITE" id="PS50926">
    <property type="entry name" value="TRAM"/>
    <property type="match status" value="1"/>
</dbReference>
<name>MIAB_BURVG</name>
<reference key="1">
    <citation type="submission" date="2007-03" db="EMBL/GenBank/DDBJ databases">
        <title>Complete sequence of chromosome 1 of Burkholderia vietnamiensis G4.</title>
        <authorList>
            <consortium name="US DOE Joint Genome Institute"/>
            <person name="Copeland A."/>
            <person name="Lucas S."/>
            <person name="Lapidus A."/>
            <person name="Barry K."/>
            <person name="Detter J.C."/>
            <person name="Glavina del Rio T."/>
            <person name="Hammon N."/>
            <person name="Israni S."/>
            <person name="Dalin E."/>
            <person name="Tice H."/>
            <person name="Pitluck S."/>
            <person name="Chain P."/>
            <person name="Malfatti S."/>
            <person name="Shin M."/>
            <person name="Vergez L."/>
            <person name="Schmutz J."/>
            <person name="Larimer F."/>
            <person name="Land M."/>
            <person name="Hauser L."/>
            <person name="Kyrpides N."/>
            <person name="Tiedje J."/>
            <person name="Richardson P."/>
        </authorList>
    </citation>
    <scope>NUCLEOTIDE SEQUENCE [LARGE SCALE GENOMIC DNA]</scope>
    <source>
        <strain>G4 / LMG 22486</strain>
    </source>
</reference>
<sequence>MTKKVYVKTFGCQMNEYDSDKMVDVLNAAEGLEKTDTPEDADIILFNTCSVREKAQEKVFSDLGRVRELKEAKPGLLIGVGGCVASQEGASIVSRAPYVDLVFGPQTLHRLPQMIDARRASGRAQVDITFPEIEKFDHLPPARVEGPSAFVSIMEGCSKYCSYCVVPYTRGDEVSRPLDDVLTEVAGLADQGVREVTLLGQNVNAYRGALSAGSADIADFATLIEYVADIPGIERIRYTTSHPKEFTQRLIDTYAKVPKLVSHLHLPVQHGSDRILMAMKRGYTVLEYKSVIRKLRAIRPDLSLSTDMIVGFPGETEDDFDKMMALVHEMSYDTSFSFIYSPRPGTPAANLHDDTPREVKLKRLQHLQATIEENVARISQSMVGKVERILVEGPSRKDPNELSGRTENNRVVNFPAPLASHPRLIGQMIDVKINHAYPHSLRGELLLVSDDASAATH</sequence>
<feature type="chain" id="PRO_0000374191" description="tRNA-2-methylthio-N(6)-dimethylallyladenosine synthase">
    <location>
        <begin position="1"/>
        <end position="457"/>
    </location>
</feature>
<feature type="domain" description="MTTase N-terminal" evidence="1">
    <location>
        <begin position="3"/>
        <end position="120"/>
    </location>
</feature>
<feature type="domain" description="Radical SAM core" evidence="2">
    <location>
        <begin position="143"/>
        <end position="377"/>
    </location>
</feature>
<feature type="domain" description="TRAM" evidence="1">
    <location>
        <begin position="380"/>
        <end position="447"/>
    </location>
</feature>
<feature type="binding site" evidence="1">
    <location>
        <position position="12"/>
    </location>
    <ligand>
        <name>[4Fe-4S] cluster</name>
        <dbReference type="ChEBI" id="CHEBI:49883"/>
        <label>1</label>
    </ligand>
</feature>
<feature type="binding site" evidence="1">
    <location>
        <position position="49"/>
    </location>
    <ligand>
        <name>[4Fe-4S] cluster</name>
        <dbReference type="ChEBI" id="CHEBI:49883"/>
        <label>1</label>
    </ligand>
</feature>
<feature type="binding site" evidence="1">
    <location>
        <position position="83"/>
    </location>
    <ligand>
        <name>[4Fe-4S] cluster</name>
        <dbReference type="ChEBI" id="CHEBI:49883"/>
        <label>1</label>
    </ligand>
</feature>
<feature type="binding site" evidence="1">
    <location>
        <position position="157"/>
    </location>
    <ligand>
        <name>[4Fe-4S] cluster</name>
        <dbReference type="ChEBI" id="CHEBI:49883"/>
        <label>2</label>
        <note>4Fe-4S-S-AdoMet</note>
    </ligand>
</feature>
<feature type="binding site" evidence="1">
    <location>
        <position position="161"/>
    </location>
    <ligand>
        <name>[4Fe-4S] cluster</name>
        <dbReference type="ChEBI" id="CHEBI:49883"/>
        <label>2</label>
        <note>4Fe-4S-S-AdoMet</note>
    </ligand>
</feature>
<feature type="binding site" evidence="1">
    <location>
        <position position="164"/>
    </location>
    <ligand>
        <name>[4Fe-4S] cluster</name>
        <dbReference type="ChEBI" id="CHEBI:49883"/>
        <label>2</label>
        <note>4Fe-4S-S-AdoMet</note>
    </ligand>
</feature>
<accession>A4JHN3</accession>
<proteinExistence type="inferred from homology"/>
<gene>
    <name evidence="1" type="primary">miaB</name>
    <name type="ordered locus">Bcep1808_2795</name>
</gene>
<evidence type="ECO:0000255" key="1">
    <source>
        <dbReference type="HAMAP-Rule" id="MF_01864"/>
    </source>
</evidence>
<evidence type="ECO:0000255" key="2">
    <source>
        <dbReference type="PROSITE-ProRule" id="PRU01266"/>
    </source>
</evidence>